<keyword id="KW-0963">Cytoplasm</keyword>
<keyword id="KW-0227">DNA damage</keyword>
<keyword id="KW-0228">DNA excision</keyword>
<keyword id="KW-0234">DNA repair</keyword>
<keyword id="KW-0267">Excision nuclease</keyword>
<keyword id="KW-1185">Reference proteome</keyword>
<keyword id="KW-0742">SOS response</keyword>
<evidence type="ECO:0000255" key="1">
    <source>
        <dbReference type="HAMAP-Rule" id="MF_00203"/>
    </source>
</evidence>
<sequence length="593" mass="68420">MNSSLKDKLAVLPDKPGCYLMKNASGEIIYVGKAKVLKNRVRSYFTGSHNGKTQLLVSEIVDFEYIVVSSAIEALILECNLIKEHDPRYNVMLRDDKTYPYIKITNEAQPRLEITRKVLKDKAKYFGPYPNAGDASEVKKLLDRLYPLRKCRNMPKQVCLYYHLGQCLAPCVYEVSAEENQRLVDQISQFLDGGHEEMKQTLTEKMLQAAENMEFERAKEYRDQIKSIEAVMEKQKITFTDTIDRDIIGFAVEKGWMCIQVFYMRKGKMIERQTTSFPYYGSETEDFMSYVSQFYYDKQNALPKEILLPQESEPELLAEWLGIKVHAPKRGKKHELVKMATENARIALQEKFALMSKDDARTVQAVHNLGHILGIPVPHRIEAFDNSNIQGTEPVSAMIVFTDGRPDKKEYRKFKIKTVEGPDDYGSMREVVRRRYSRLLKENQPMPDLIVIDGGKGQISAAMDVLENELGLYIPVCGLAKDEKHRTAQLMYGDPPEPVNLRRDSYEFYLLQRIQDEVHRFVITFHRQSRTKTMLSSQLDEIPGIGEKRRKLLFSHFGSLKKMREATVEDFRQLGIGDKLAKEIIGHLRKLDT</sequence>
<gene>
    <name evidence="1" type="primary">uvrC</name>
    <name type="ordered locus">BBR47_16800</name>
</gene>
<reference key="1">
    <citation type="submission" date="2005-03" db="EMBL/GenBank/DDBJ databases">
        <title>Brevibacillus brevis strain 47, complete genome.</title>
        <authorList>
            <person name="Hosoyama A."/>
            <person name="Yamada R."/>
            <person name="Hongo Y."/>
            <person name="Terui Y."/>
            <person name="Ankai A."/>
            <person name="Masuyama W."/>
            <person name="Sekiguchi M."/>
            <person name="Takeda T."/>
            <person name="Asano K."/>
            <person name="Ohji S."/>
            <person name="Ichikawa N."/>
            <person name="Narita S."/>
            <person name="Aoki N."/>
            <person name="Miura H."/>
            <person name="Matsushita S."/>
            <person name="Sekigawa T."/>
            <person name="Yamagata H."/>
            <person name="Yoshikawa H."/>
            <person name="Udaka S."/>
            <person name="Tanikawa S."/>
            <person name="Fujita N."/>
        </authorList>
    </citation>
    <scope>NUCLEOTIDE SEQUENCE [LARGE SCALE GENOMIC DNA]</scope>
    <source>
        <strain>47 / JCM 6285 / NBRC 100599</strain>
    </source>
</reference>
<proteinExistence type="inferred from homology"/>
<protein>
    <recommendedName>
        <fullName evidence="1">UvrABC system protein C</fullName>
        <shortName evidence="1">Protein UvrC</shortName>
    </recommendedName>
    <alternativeName>
        <fullName evidence="1">Excinuclease ABC subunit C</fullName>
    </alternativeName>
</protein>
<accession>C0Z9I7</accession>
<comment type="function">
    <text evidence="1">The UvrABC repair system catalyzes the recognition and processing of DNA lesions. UvrC both incises the 5' and 3' sides of the lesion. The N-terminal half is responsible for the 3' incision and the C-terminal half is responsible for the 5' incision.</text>
</comment>
<comment type="subunit">
    <text evidence="1">Interacts with UvrB in an incision complex.</text>
</comment>
<comment type="subcellular location">
    <subcellularLocation>
        <location evidence="1">Cytoplasm</location>
    </subcellularLocation>
</comment>
<comment type="similarity">
    <text evidence="1">Belongs to the UvrC family.</text>
</comment>
<dbReference type="EMBL" id="AP008955">
    <property type="protein sequence ID" value="BAH42657.1"/>
    <property type="molecule type" value="Genomic_DNA"/>
</dbReference>
<dbReference type="RefSeq" id="WP_012685401.1">
    <property type="nucleotide sequence ID" value="NC_012491.1"/>
</dbReference>
<dbReference type="SMR" id="C0Z9I7"/>
<dbReference type="STRING" id="358681.BBR47_16800"/>
<dbReference type="KEGG" id="bbe:BBR47_16800"/>
<dbReference type="eggNOG" id="COG0322">
    <property type="taxonomic scope" value="Bacteria"/>
</dbReference>
<dbReference type="HOGENOM" id="CLU_014841_3_2_9"/>
<dbReference type="Proteomes" id="UP000001877">
    <property type="component" value="Chromosome"/>
</dbReference>
<dbReference type="GO" id="GO:0005737">
    <property type="term" value="C:cytoplasm"/>
    <property type="evidence" value="ECO:0007669"/>
    <property type="project" value="UniProtKB-SubCell"/>
</dbReference>
<dbReference type="GO" id="GO:0009380">
    <property type="term" value="C:excinuclease repair complex"/>
    <property type="evidence" value="ECO:0007669"/>
    <property type="project" value="InterPro"/>
</dbReference>
<dbReference type="GO" id="GO:0003677">
    <property type="term" value="F:DNA binding"/>
    <property type="evidence" value="ECO:0007669"/>
    <property type="project" value="UniProtKB-UniRule"/>
</dbReference>
<dbReference type="GO" id="GO:0009381">
    <property type="term" value="F:excinuclease ABC activity"/>
    <property type="evidence" value="ECO:0007669"/>
    <property type="project" value="UniProtKB-UniRule"/>
</dbReference>
<dbReference type="GO" id="GO:0006289">
    <property type="term" value="P:nucleotide-excision repair"/>
    <property type="evidence" value="ECO:0007669"/>
    <property type="project" value="UniProtKB-UniRule"/>
</dbReference>
<dbReference type="GO" id="GO:0009432">
    <property type="term" value="P:SOS response"/>
    <property type="evidence" value="ECO:0007669"/>
    <property type="project" value="UniProtKB-UniRule"/>
</dbReference>
<dbReference type="CDD" id="cd10434">
    <property type="entry name" value="GIY-YIG_UvrC_Cho"/>
    <property type="match status" value="1"/>
</dbReference>
<dbReference type="FunFam" id="3.30.420.340:FF:000002">
    <property type="entry name" value="UvrABC system protein C"/>
    <property type="match status" value="1"/>
</dbReference>
<dbReference type="FunFam" id="3.40.1440.10:FF:000001">
    <property type="entry name" value="UvrABC system protein C"/>
    <property type="match status" value="1"/>
</dbReference>
<dbReference type="Gene3D" id="1.10.150.20">
    <property type="entry name" value="5' to 3' exonuclease, C-terminal subdomain"/>
    <property type="match status" value="1"/>
</dbReference>
<dbReference type="Gene3D" id="3.40.1440.10">
    <property type="entry name" value="GIY-YIG endonuclease"/>
    <property type="match status" value="1"/>
</dbReference>
<dbReference type="Gene3D" id="4.10.860.10">
    <property type="entry name" value="UVR domain"/>
    <property type="match status" value="1"/>
</dbReference>
<dbReference type="Gene3D" id="3.30.420.340">
    <property type="entry name" value="UvrC, RNAse H endonuclease domain"/>
    <property type="match status" value="1"/>
</dbReference>
<dbReference type="HAMAP" id="MF_00203">
    <property type="entry name" value="UvrC"/>
    <property type="match status" value="1"/>
</dbReference>
<dbReference type="InterPro" id="IPR000305">
    <property type="entry name" value="GIY-YIG_endonuc"/>
</dbReference>
<dbReference type="InterPro" id="IPR035901">
    <property type="entry name" value="GIY-YIG_endonuc_sf"/>
</dbReference>
<dbReference type="InterPro" id="IPR047296">
    <property type="entry name" value="GIY-YIG_UvrC_Cho"/>
</dbReference>
<dbReference type="InterPro" id="IPR010994">
    <property type="entry name" value="RuvA_2-like"/>
</dbReference>
<dbReference type="InterPro" id="IPR001943">
    <property type="entry name" value="UVR_dom"/>
</dbReference>
<dbReference type="InterPro" id="IPR036876">
    <property type="entry name" value="UVR_dom_sf"/>
</dbReference>
<dbReference type="InterPro" id="IPR050066">
    <property type="entry name" value="UvrABC_protein_C"/>
</dbReference>
<dbReference type="InterPro" id="IPR004791">
    <property type="entry name" value="UvrC"/>
</dbReference>
<dbReference type="InterPro" id="IPR001162">
    <property type="entry name" value="UvrC_RNase_H_dom"/>
</dbReference>
<dbReference type="InterPro" id="IPR038476">
    <property type="entry name" value="UvrC_RNase_H_dom_sf"/>
</dbReference>
<dbReference type="NCBIfam" id="NF001824">
    <property type="entry name" value="PRK00558.1-5"/>
    <property type="match status" value="1"/>
</dbReference>
<dbReference type="NCBIfam" id="TIGR00194">
    <property type="entry name" value="uvrC"/>
    <property type="match status" value="1"/>
</dbReference>
<dbReference type="PANTHER" id="PTHR30562:SF1">
    <property type="entry name" value="UVRABC SYSTEM PROTEIN C"/>
    <property type="match status" value="1"/>
</dbReference>
<dbReference type="PANTHER" id="PTHR30562">
    <property type="entry name" value="UVRC/OXIDOREDUCTASE"/>
    <property type="match status" value="1"/>
</dbReference>
<dbReference type="Pfam" id="PF01541">
    <property type="entry name" value="GIY-YIG"/>
    <property type="match status" value="1"/>
</dbReference>
<dbReference type="Pfam" id="PF14520">
    <property type="entry name" value="HHH_5"/>
    <property type="match status" value="1"/>
</dbReference>
<dbReference type="Pfam" id="PF02151">
    <property type="entry name" value="UVR"/>
    <property type="match status" value="1"/>
</dbReference>
<dbReference type="Pfam" id="PF22920">
    <property type="entry name" value="UvrC_RNaseH"/>
    <property type="match status" value="1"/>
</dbReference>
<dbReference type="Pfam" id="PF08459">
    <property type="entry name" value="UvrC_RNaseH_dom"/>
    <property type="match status" value="1"/>
</dbReference>
<dbReference type="SMART" id="SM00465">
    <property type="entry name" value="GIYc"/>
    <property type="match status" value="1"/>
</dbReference>
<dbReference type="SUPFAM" id="SSF46600">
    <property type="entry name" value="C-terminal UvrC-binding domain of UvrB"/>
    <property type="match status" value="1"/>
</dbReference>
<dbReference type="SUPFAM" id="SSF82771">
    <property type="entry name" value="GIY-YIG endonuclease"/>
    <property type="match status" value="1"/>
</dbReference>
<dbReference type="SUPFAM" id="SSF47781">
    <property type="entry name" value="RuvA domain 2-like"/>
    <property type="match status" value="1"/>
</dbReference>
<dbReference type="PROSITE" id="PS50164">
    <property type="entry name" value="GIY_YIG"/>
    <property type="match status" value="1"/>
</dbReference>
<dbReference type="PROSITE" id="PS50151">
    <property type="entry name" value="UVR"/>
    <property type="match status" value="1"/>
</dbReference>
<dbReference type="PROSITE" id="PS50165">
    <property type="entry name" value="UVRC"/>
    <property type="match status" value="1"/>
</dbReference>
<organism>
    <name type="scientific">Brevibacillus brevis (strain 47 / JCM 6285 / NBRC 100599)</name>
    <dbReference type="NCBI Taxonomy" id="358681"/>
    <lineage>
        <taxon>Bacteria</taxon>
        <taxon>Bacillati</taxon>
        <taxon>Bacillota</taxon>
        <taxon>Bacilli</taxon>
        <taxon>Bacillales</taxon>
        <taxon>Paenibacillaceae</taxon>
        <taxon>Brevibacillus</taxon>
    </lineage>
</organism>
<name>UVRC_BREBN</name>
<feature type="chain" id="PRO_1000200575" description="UvrABC system protein C">
    <location>
        <begin position="1"/>
        <end position="593"/>
    </location>
</feature>
<feature type="domain" description="GIY-YIG" evidence="1">
    <location>
        <begin position="14"/>
        <end position="91"/>
    </location>
</feature>
<feature type="domain" description="UVR" evidence="1">
    <location>
        <begin position="196"/>
        <end position="231"/>
    </location>
</feature>